<dbReference type="EC" id="4.2.1.20"/>
<dbReference type="EC" id="4.1.2.8"/>
<dbReference type="EMBL" id="AC002330">
    <property type="protein sequence ID" value="AAC78257.1"/>
    <property type="molecule type" value="Genomic_DNA"/>
</dbReference>
<dbReference type="EMBL" id="AL161494">
    <property type="protein sequence ID" value="CAB80754.1"/>
    <property type="molecule type" value="Genomic_DNA"/>
</dbReference>
<dbReference type="EMBL" id="CP002687">
    <property type="protein sequence ID" value="AEE82204.1"/>
    <property type="molecule type" value="Genomic_DNA"/>
</dbReference>
<dbReference type="EMBL" id="AK117668">
    <property type="protein sequence ID" value="BAC42321.1"/>
    <property type="molecule type" value="mRNA"/>
</dbReference>
<dbReference type="EMBL" id="BT006097">
    <property type="protein sequence ID" value="AAP04082.1"/>
    <property type="molecule type" value="mRNA"/>
</dbReference>
<dbReference type="EMBL" id="F20005">
    <property type="protein sequence ID" value="CAA23378.1"/>
    <property type="molecule type" value="mRNA"/>
</dbReference>
<dbReference type="PIR" id="T01088">
    <property type="entry name" value="T01088"/>
</dbReference>
<dbReference type="RefSeq" id="NP_192170.1">
    <property type="nucleotide sequence ID" value="NM_116495.4"/>
</dbReference>
<dbReference type="SMR" id="O22765"/>
<dbReference type="FunCoup" id="O22765">
    <property type="interactions" value="363"/>
</dbReference>
<dbReference type="STRING" id="3702.O22765"/>
<dbReference type="PaxDb" id="3702-AT4G02610.1"/>
<dbReference type="ProMEX" id="O22765"/>
<dbReference type="ProteomicsDB" id="232445"/>
<dbReference type="EnsemblPlants" id="AT4G02610.1">
    <property type="protein sequence ID" value="AT4G02610.1"/>
    <property type="gene ID" value="AT4G02610"/>
</dbReference>
<dbReference type="GeneID" id="828226"/>
<dbReference type="Gramene" id="AT4G02610.1">
    <property type="protein sequence ID" value="AT4G02610.1"/>
    <property type="gene ID" value="AT4G02610"/>
</dbReference>
<dbReference type="KEGG" id="ath:AT4G02610"/>
<dbReference type="Araport" id="AT4G02610"/>
<dbReference type="TAIR" id="AT4G02610"/>
<dbReference type="eggNOG" id="KOG4175">
    <property type="taxonomic scope" value="Eukaryota"/>
</dbReference>
<dbReference type="HOGENOM" id="CLU_016734_0_2_1"/>
<dbReference type="InParanoid" id="O22765"/>
<dbReference type="OMA" id="IVAACHK"/>
<dbReference type="OrthoDB" id="10050244at2759"/>
<dbReference type="PhylomeDB" id="O22765"/>
<dbReference type="BioCyc" id="ARA:AT4G02610-MONOMER"/>
<dbReference type="BRENDA" id="4.1.2.8">
    <property type="organism ID" value="399"/>
</dbReference>
<dbReference type="UniPathway" id="UPA00035">
    <property type="reaction ID" value="UER00044"/>
</dbReference>
<dbReference type="PRO" id="PR:O22765"/>
<dbReference type="Proteomes" id="UP000006548">
    <property type="component" value="Chromosome 4"/>
</dbReference>
<dbReference type="ExpressionAtlas" id="O22765">
    <property type="expression patterns" value="baseline and differential"/>
</dbReference>
<dbReference type="GO" id="GO:0005737">
    <property type="term" value="C:cytoplasm"/>
    <property type="evidence" value="ECO:0000314"/>
    <property type="project" value="UniProtKB"/>
</dbReference>
<dbReference type="GO" id="GO:0033984">
    <property type="term" value="F:indole-3-glycerol-phosphate lyase activity"/>
    <property type="evidence" value="ECO:0000314"/>
    <property type="project" value="UniProtKB"/>
</dbReference>
<dbReference type="GO" id="GO:0004834">
    <property type="term" value="F:tryptophan synthase activity"/>
    <property type="evidence" value="ECO:0000314"/>
    <property type="project" value="UniProtKB"/>
</dbReference>
<dbReference type="GO" id="GO:0009851">
    <property type="term" value="P:auxin biosynthetic process"/>
    <property type="evidence" value="ECO:0007669"/>
    <property type="project" value="UniProtKB-KW"/>
</dbReference>
<dbReference type="CDD" id="cd04724">
    <property type="entry name" value="Tryptophan_synthase_alpha"/>
    <property type="match status" value="1"/>
</dbReference>
<dbReference type="FunFam" id="3.20.20.70:FF:000107">
    <property type="entry name" value="Tryptophan synthase alpha chain, chloroplastic"/>
    <property type="match status" value="1"/>
</dbReference>
<dbReference type="Gene3D" id="3.20.20.70">
    <property type="entry name" value="Aldolase class I"/>
    <property type="match status" value="1"/>
</dbReference>
<dbReference type="HAMAP" id="MF_00131">
    <property type="entry name" value="Trp_synth_alpha"/>
    <property type="match status" value="1"/>
</dbReference>
<dbReference type="InterPro" id="IPR013785">
    <property type="entry name" value="Aldolase_TIM"/>
</dbReference>
<dbReference type="InterPro" id="IPR011060">
    <property type="entry name" value="RibuloseP-bd_barrel"/>
</dbReference>
<dbReference type="InterPro" id="IPR018204">
    <property type="entry name" value="Trp_synthase_alpha_AS"/>
</dbReference>
<dbReference type="InterPro" id="IPR002028">
    <property type="entry name" value="Trp_synthase_suA"/>
</dbReference>
<dbReference type="NCBIfam" id="TIGR00262">
    <property type="entry name" value="trpA"/>
    <property type="match status" value="1"/>
</dbReference>
<dbReference type="PANTHER" id="PTHR43406:SF6">
    <property type="entry name" value="TRYPTOPHAN SYNTHASE ALPHA CHAIN"/>
    <property type="match status" value="1"/>
</dbReference>
<dbReference type="PANTHER" id="PTHR43406">
    <property type="entry name" value="TRYPTOPHAN SYNTHASE, ALPHA CHAIN"/>
    <property type="match status" value="1"/>
</dbReference>
<dbReference type="Pfam" id="PF00290">
    <property type="entry name" value="Trp_syntA"/>
    <property type="match status" value="1"/>
</dbReference>
<dbReference type="SUPFAM" id="SSF51366">
    <property type="entry name" value="Ribulose-phoshate binding barrel"/>
    <property type="match status" value="1"/>
</dbReference>
<dbReference type="PROSITE" id="PS00167">
    <property type="entry name" value="TRP_SYNTHASE_ALPHA"/>
    <property type="match status" value="1"/>
</dbReference>
<evidence type="ECO:0000250" key="1"/>
<evidence type="ECO:0000269" key="2">
    <source>
    </source>
</evidence>
<evidence type="ECO:0000305" key="3"/>
<gene>
    <name type="primary">TRPA1</name>
    <name type="synonym">INS</name>
    <name type="synonym">TSA</name>
    <name type="ordered locus">At4g02610</name>
    <name type="ORF">T10P11.11</name>
</gene>
<organism>
    <name type="scientific">Arabidopsis thaliana</name>
    <name type="common">Mouse-ear cress</name>
    <dbReference type="NCBI Taxonomy" id="3702"/>
    <lineage>
        <taxon>Eukaryota</taxon>
        <taxon>Viridiplantae</taxon>
        <taxon>Streptophyta</taxon>
        <taxon>Embryophyta</taxon>
        <taxon>Tracheophyta</taxon>
        <taxon>Spermatophyta</taxon>
        <taxon>Magnoliopsida</taxon>
        <taxon>eudicotyledons</taxon>
        <taxon>Gunneridae</taxon>
        <taxon>Pentapetalae</taxon>
        <taxon>rosids</taxon>
        <taxon>malvids</taxon>
        <taxon>Brassicales</taxon>
        <taxon>Brassicaceae</taxon>
        <taxon>Camelineae</taxon>
        <taxon>Arabidopsis</taxon>
    </lineage>
</organism>
<sequence>MDLLKTPSSTVGLSETFARLKSQGKVALIPYITAGDPDLSTTAKALKVLDSCGSDIIELGVPYSDPLADGPAIQAAARRSLLKGTNFNSIISMLKEVIPQLSCPIALFTYYNPILRRGVENYMTVIKNAGVHGLLVPDVPLEETETLRNEARKHQIELVLLTTPTTPKERMNAIVEASEGFIYLVSSVGVTGTRESVNEKVQSLLQQIKEATSKPVAVGFGISKPEHVKQVAEWGADGVIVGSAMVKILGESESPEQGLKELEFFTKSLKSALVS</sequence>
<name>TRPA1_ARATH</name>
<keyword id="KW-0028">Amino-acid biosynthesis</keyword>
<keyword id="KW-0057">Aromatic amino acid biosynthesis</keyword>
<keyword id="KW-0073">Auxin biosynthesis</keyword>
<keyword id="KW-0963">Cytoplasm</keyword>
<keyword id="KW-0456">Lyase</keyword>
<keyword id="KW-1185">Reference proteome</keyword>
<keyword id="KW-0822">Tryptophan biosynthesis</keyword>
<accession>O22765</accession>
<accession>Q43290</accession>
<reference key="1">
    <citation type="journal article" date="1999" name="Nature">
        <title>Sequence and analysis of chromosome 4 of the plant Arabidopsis thaliana.</title>
        <authorList>
            <person name="Mayer K.F.X."/>
            <person name="Schueller C."/>
            <person name="Wambutt R."/>
            <person name="Murphy G."/>
            <person name="Volckaert G."/>
            <person name="Pohl T."/>
            <person name="Duesterhoeft A."/>
            <person name="Stiekema W."/>
            <person name="Entian K.-D."/>
            <person name="Terryn N."/>
            <person name="Harris B."/>
            <person name="Ansorge W."/>
            <person name="Brandt P."/>
            <person name="Grivell L.A."/>
            <person name="Rieger M."/>
            <person name="Weichselgartner M."/>
            <person name="de Simone V."/>
            <person name="Obermaier B."/>
            <person name="Mache R."/>
            <person name="Mueller M."/>
            <person name="Kreis M."/>
            <person name="Delseny M."/>
            <person name="Puigdomenech P."/>
            <person name="Watson M."/>
            <person name="Schmidtheini T."/>
            <person name="Reichert B."/>
            <person name="Portetelle D."/>
            <person name="Perez-Alonso M."/>
            <person name="Boutry M."/>
            <person name="Bancroft I."/>
            <person name="Vos P."/>
            <person name="Hoheisel J."/>
            <person name="Zimmermann W."/>
            <person name="Wedler H."/>
            <person name="Ridley P."/>
            <person name="Langham S.-A."/>
            <person name="McCullagh B."/>
            <person name="Bilham L."/>
            <person name="Robben J."/>
            <person name="van der Schueren J."/>
            <person name="Grymonprez B."/>
            <person name="Chuang Y.-J."/>
            <person name="Vandenbussche F."/>
            <person name="Braeken M."/>
            <person name="Weltjens I."/>
            <person name="Voet M."/>
            <person name="Bastiaens I."/>
            <person name="Aert R."/>
            <person name="Defoor E."/>
            <person name="Weitzenegger T."/>
            <person name="Bothe G."/>
            <person name="Ramsperger U."/>
            <person name="Hilbert H."/>
            <person name="Braun M."/>
            <person name="Holzer E."/>
            <person name="Brandt A."/>
            <person name="Peters S."/>
            <person name="van Staveren M."/>
            <person name="Dirkse W."/>
            <person name="Mooijman P."/>
            <person name="Klein Lankhorst R."/>
            <person name="Rose M."/>
            <person name="Hauf J."/>
            <person name="Koetter P."/>
            <person name="Berneiser S."/>
            <person name="Hempel S."/>
            <person name="Feldpausch M."/>
            <person name="Lamberth S."/>
            <person name="Van den Daele H."/>
            <person name="De Keyser A."/>
            <person name="Buysshaert C."/>
            <person name="Gielen J."/>
            <person name="Villarroel R."/>
            <person name="De Clercq R."/>
            <person name="van Montagu M."/>
            <person name="Rogers J."/>
            <person name="Cronin A."/>
            <person name="Quail M.A."/>
            <person name="Bray-Allen S."/>
            <person name="Clark L."/>
            <person name="Doggett J."/>
            <person name="Hall S."/>
            <person name="Kay M."/>
            <person name="Lennard N."/>
            <person name="McLay K."/>
            <person name="Mayes R."/>
            <person name="Pettett A."/>
            <person name="Rajandream M.A."/>
            <person name="Lyne M."/>
            <person name="Benes V."/>
            <person name="Rechmann S."/>
            <person name="Borkova D."/>
            <person name="Bloecker H."/>
            <person name="Scharfe M."/>
            <person name="Grimm M."/>
            <person name="Loehnert T.-H."/>
            <person name="Dose S."/>
            <person name="de Haan M."/>
            <person name="Maarse A.C."/>
            <person name="Schaefer M."/>
            <person name="Mueller-Auer S."/>
            <person name="Gabel C."/>
            <person name="Fuchs M."/>
            <person name="Fartmann B."/>
            <person name="Granderath K."/>
            <person name="Dauner D."/>
            <person name="Herzl A."/>
            <person name="Neumann S."/>
            <person name="Argiriou A."/>
            <person name="Vitale D."/>
            <person name="Liguori R."/>
            <person name="Piravandi E."/>
            <person name="Massenet O."/>
            <person name="Quigley F."/>
            <person name="Clabauld G."/>
            <person name="Muendlein A."/>
            <person name="Felber R."/>
            <person name="Schnabl S."/>
            <person name="Hiller R."/>
            <person name="Schmidt W."/>
            <person name="Lecharny A."/>
            <person name="Aubourg S."/>
            <person name="Chefdor F."/>
            <person name="Cooke R."/>
            <person name="Berger C."/>
            <person name="Monfort A."/>
            <person name="Casacuberta E."/>
            <person name="Gibbons T."/>
            <person name="Weber N."/>
            <person name="Vandenbol M."/>
            <person name="Bargues M."/>
            <person name="Terol J."/>
            <person name="Torres A."/>
            <person name="Perez-Perez A."/>
            <person name="Purnelle B."/>
            <person name="Bent E."/>
            <person name="Johnson S."/>
            <person name="Tacon D."/>
            <person name="Jesse T."/>
            <person name="Heijnen L."/>
            <person name="Schwarz S."/>
            <person name="Scholler P."/>
            <person name="Heber S."/>
            <person name="Francs P."/>
            <person name="Bielke C."/>
            <person name="Frishman D."/>
            <person name="Haase D."/>
            <person name="Lemcke K."/>
            <person name="Mewes H.-W."/>
            <person name="Stocker S."/>
            <person name="Zaccaria P."/>
            <person name="Bevan M."/>
            <person name="Wilson R.K."/>
            <person name="de la Bastide M."/>
            <person name="Habermann K."/>
            <person name="Parnell L."/>
            <person name="Dedhia N."/>
            <person name="Gnoj L."/>
            <person name="Schutz K."/>
            <person name="Huang E."/>
            <person name="Spiegel L."/>
            <person name="Sekhon M."/>
            <person name="Murray J."/>
            <person name="Sheet P."/>
            <person name="Cordes M."/>
            <person name="Abu-Threideh J."/>
            <person name="Stoneking T."/>
            <person name="Kalicki J."/>
            <person name="Graves T."/>
            <person name="Harmon G."/>
            <person name="Edwards J."/>
            <person name="Latreille P."/>
            <person name="Courtney L."/>
            <person name="Cloud J."/>
            <person name="Abbott A."/>
            <person name="Scott K."/>
            <person name="Johnson D."/>
            <person name="Minx P."/>
            <person name="Bentley D."/>
            <person name="Fulton B."/>
            <person name="Miller N."/>
            <person name="Greco T."/>
            <person name="Kemp K."/>
            <person name="Kramer J."/>
            <person name="Fulton L."/>
            <person name="Mardis E."/>
            <person name="Dante M."/>
            <person name="Pepin K."/>
            <person name="Hillier L.W."/>
            <person name="Nelson J."/>
            <person name="Spieth J."/>
            <person name="Ryan E."/>
            <person name="Andrews S."/>
            <person name="Geisel C."/>
            <person name="Layman D."/>
            <person name="Du H."/>
            <person name="Ali J."/>
            <person name="Berghoff A."/>
            <person name="Jones K."/>
            <person name="Drone K."/>
            <person name="Cotton M."/>
            <person name="Joshu C."/>
            <person name="Antonoiu B."/>
            <person name="Zidanic M."/>
            <person name="Strong C."/>
            <person name="Sun H."/>
            <person name="Lamar B."/>
            <person name="Yordan C."/>
            <person name="Ma P."/>
            <person name="Zhong J."/>
            <person name="Preston R."/>
            <person name="Vil D."/>
            <person name="Shekher M."/>
            <person name="Matero A."/>
            <person name="Shah R."/>
            <person name="Swaby I.K."/>
            <person name="O'Shaughnessy A."/>
            <person name="Rodriguez M."/>
            <person name="Hoffman J."/>
            <person name="Till S."/>
            <person name="Granat S."/>
            <person name="Shohdy N."/>
            <person name="Hasegawa A."/>
            <person name="Hameed A."/>
            <person name="Lodhi M."/>
            <person name="Johnson A."/>
            <person name="Chen E."/>
            <person name="Marra M.A."/>
            <person name="Martienssen R."/>
            <person name="McCombie W.R."/>
        </authorList>
    </citation>
    <scope>NUCLEOTIDE SEQUENCE [LARGE SCALE GENOMIC DNA]</scope>
    <source>
        <strain>cv. Columbia</strain>
    </source>
</reference>
<reference key="2">
    <citation type="journal article" date="2017" name="Plant J.">
        <title>Araport11: a complete reannotation of the Arabidopsis thaliana reference genome.</title>
        <authorList>
            <person name="Cheng C.Y."/>
            <person name="Krishnakumar V."/>
            <person name="Chan A.P."/>
            <person name="Thibaud-Nissen F."/>
            <person name="Schobel S."/>
            <person name="Town C.D."/>
        </authorList>
    </citation>
    <scope>GENOME REANNOTATION</scope>
    <source>
        <strain>cv. Columbia</strain>
    </source>
</reference>
<reference key="3">
    <citation type="journal article" date="2002" name="Science">
        <title>Functional annotation of a full-length Arabidopsis cDNA collection.</title>
        <authorList>
            <person name="Seki M."/>
            <person name="Narusaka M."/>
            <person name="Kamiya A."/>
            <person name="Ishida J."/>
            <person name="Satou M."/>
            <person name="Sakurai T."/>
            <person name="Nakajima M."/>
            <person name="Enju A."/>
            <person name="Akiyama K."/>
            <person name="Oono Y."/>
            <person name="Muramatsu M."/>
            <person name="Hayashizaki Y."/>
            <person name="Kawai J."/>
            <person name="Carninci P."/>
            <person name="Itoh M."/>
            <person name="Ishii Y."/>
            <person name="Arakawa T."/>
            <person name="Shibata K."/>
            <person name="Shinagawa A."/>
            <person name="Shinozaki K."/>
        </authorList>
    </citation>
    <scope>NUCLEOTIDE SEQUENCE [LARGE SCALE MRNA]</scope>
    <source>
        <strain>cv. Columbia</strain>
    </source>
</reference>
<reference key="4">
    <citation type="journal article" date="2003" name="Science">
        <title>Empirical analysis of transcriptional activity in the Arabidopsis genome.</title>
        <authorList>
            <person name="Yamada K."/>
            <person name="Lim J."/>
            <person name="Dale J.M."/>
            <person name="Chen H."/>
            <person name="Shinn P."/>
            <person name="Palm C.J."/>
            <person name="Southwick A.M."/>
            <person name="Wu H.C."/>
            <person name="Kim C.J."/>
            <person name="Nguyen M."/>
            <person name="Pham P.K."/>
            <person name="Cheuk R.F."/>
            <person name="Karlin-Newmann G."/>
            <person name="Liu S.X."/>
            <person name="Lam B."/>
            <person name="Sakano H."/>
            <person name="Wu T."/>
            <person name="Yu G."/>
            <person name="Miranda M."/>
            <person name="Quach H.L."/>
            <person name="Tripp M."/>
            <person name="Chang C.H."/>
            <person name="Lee J.M."/>
            <person name="Toriumi M.J."/>
            <person name="Chan M.M."/>
            <person name="Tang C.C."/>
            <person name="Onodera C.S."/>
            <person name="Deng J.M."/>
            <person name="Akiyama K."/>
            <person name="Ansari Y."/>
            <person name="Arakawa T."/>
            <person name="Banh J."/>
            <person name="Banno F."/>
            <person name="Bowser L."/>
            <person name="Brooks S.Y."/>
            <person name="Carninci P."/>
            <person name="Chao Q."/>
            <person name="Choy N."/>
            <person name="Enju A."/>
            <person name="Goldsmith A.D."/>
            <person name="Gurjal M."/>
            <person name="Hansen N.F."/>
            <person name="Hayashizaki Y."/>
            <person name="Johnson-Hopson C."/>
            <person name="Hsuan V.W."/>
            <person name="Iida K."/>
            <person name="Karnes M."/>
            <person name="Khan S."/>
            <person name="Koesema E."/>
            <person name="Ishida J."/>
            <person name="Jiang P.X."/>
            <person name="Jones T."/>
            <person name="Kawai J."/>
            <person name="Kamiya A."/>
            <person name="Meyers C."/>
            <person name="Nakajima M."/>
            <person name="Narusaka M."/>
            <person name="Seki M."/>
            <person name="Sakurai T."/>
            <person name="Satou M."/>
            <person name="Tamse R."/>
            <person name="Vaysberg M."/>
            <person name="Wallender E.K."/>
            <person name="Wong C."/>
            <person name="Yamamura Y."/>
            <person name="Yuan S."/>
            <person name="Shinozaki K."/>
            <person name="Davis R.W."/>
            <person name="Theologis A."/>
            <person name="Ecker J.R."/>
        </authorList>
    </citation>
    <scope>NUCLEOTIDE SEQUENCE [LARGE SCALE MRNA]</scope>
    <source>
        <strain>cv. Columbia</strain>
    </source>
</reference>
<reference key="5">
    <citation type="submission" date="1996-03" db="EMBL/GenBank/DDBJ databases">
        <title>The Arabidopsis thaliana transcribed genome: the GDR cDNA program.</title>
        <authorList>
            <person name="Cooke R."/>
            <person name="Laudie M."/>
            <person name="Raynal M."/>
            <person name="Delseny M."/>
        </authorList>
    </citation>
    <scope>NUCLEOTIDE SEQUENCE [LARGE SCALE MRNA] OF 1-87</scope>
    <source>
        <strain>cv. Columbia</strain>
        <tissue>Protoplast</tissue>
    </source>
</reference>
<reference key="6">
    <citation type="journal article" date="2008" name="J. Integr. Plant Biol.">
        <title>Arabidopsis indole synthase, a homolog of tryptophan synthase alpha, is an enzyme involved in the Trp-independent indole-containing metabolite biosynthesis.</title>
        <authorList>
            <person name="Zhang R."/>
            <person name="Wang B."/>
            <person name="Ouyang J."/>
            <person name="Li J."/>
            <person name="Wang Y."/>
        </authorList>
    </citation>
    <scope>FUNCTION</scope>
    <scope>CATALYTIC ACTIVITY</scope>
    <scope>SUBCELLULAR LOCATION</scope>
    <scope>TISSUE SPECIFICITY</scope>
    <scope>DEVELOPMENTAL STAGE</scope>
    <source>
        <strain>cv. Columbia</strain>
    </source>
</reference>
<reference key="7">
    <citation type="journal article" date="2008" name="Plant Physiol.">
        <title>Principal transcriptional programs regulating plant amino acid metabolism in response to abiotic stresses.</title>
        <authorList>
            <person name="Less H."/>
            <person name="Galili G."/>
        </authorList>
    </citation>
    <scope>REVIEW</scope>
</reference>
<proteinExistence type="evidence at protein level"/>
<protein>
    <recommendedName>
        <fullName>Tryptophan synthase alpha chain</fullName>
        <ecNumber>4.2.1.20</ecNumber>
    </recommendedName>
    <alternativeName>
        <fullName>Indole synthase</fullName>
    </alternativeName>
    <alternativeName>
        <fullName>Indole-3-glycerol-phosphate lyase</fullName>
        <ecNumber>4.1.2.8</ecNumber>
    </alternativeName>
</protein>
<comment type="function">
    <text evidence="1 2">The alpha subunit is responsible for the aldol cleavage of indoleglycerol phosphate to indole and glyceraldehyde 3-phosphate (By similarity). Contributes to the tryptophan-independent indole biosynthesis, and possibly to auxin production.</text>
</comment>
<comment type="catalytic activity">
    <reaction evidence="2">
        <text>(1S,2R)-1-C-(indol-3-yl)glycerol 3-phosphate + L-serine = D-glyceraldehyde 3-phosphate + L-tryptophan + H2O</text>
        <dbReference type="Rhea" id="RHEA:10532"/>
        <dbReference type="ChEBI" id="CHEBI:15377"/>
        <dbReference type="ChEBI" id="CHEBI:33384"/>
        <dbReference type="ChEBI" id="CHEBI:57912"/>
        <dbReference type="ChEBI" id="CHEBI:58866"/>
        <dbReference type="ChEBI" id="CHEBI:59776"/>
        <dbReference type="EC" id="4.2.1.20"/>
    </reaction>
</comment>
<comment type="catalytic activity">
    <reaction evidence="2">
        <text>(1S,2R)-1-C-(indol-3-yl)glycerol 3-phosphate = indole + D-glyceraldehyde 3-phosphate</text>
        <dbReference type="Rhea" id="RHEA:14081"/>
        <dbReference type="ChEBI" id="CHEBI:16881"/>
        <dbReference type="ChEBI" id="CHEBI:58866"/>
        <dbReference type="ChEBI" id="CHEBI:59776"/>
        <dbReference type="EC" id="4.1.2.8"/>
    </reaction>
</comment>
<comment type="pathway">
    <text>Amino-acid biosynthesis; L-tryptophan biosynthesis; L-tryptophan from chorismate: step 5/5.</text>
</comment>
<comment type="subunit">
    <text evidence="1">Tetramer of two alpha and two beta chains.</text>
</comment>
<comment type="subcellular location">
    <subcellularLocation>
        <location evidence="2">Cytoplasm</location>
    </subcellularLocation>
</comment>
<comment type="tissue specificity">
    <text evidence="2">Ubiquitously expressed at low levels in seedlings, roots, hypocotyls, cotyledons, stems, leaves, inflorescences, flowers, siliques and seeds.</text>
</comment>
<comment type="developmental stage">
    <text evidence="2">Mostly present in vascular tissues. In flowers, expressed in carpels, stamens and pollen.</text>
</comment>
<comment type="similarity">
    <text evidence="3">Belongs to the TrpA family.</text>
</comment>
<feature type="chain" id="PRO_0000420604" description="Tryptophan synthase alpha chain">
    <location>
        <begin position="1"/>
        <end position="275"/>
    </location>
</feature>
<feature type="active site" description="Proton acceptor" evidence="1">
    <location>
        <position position="58"/>
    </location>
</feature>
<feature type="active site" description="Proton acceptor" evidence="1">
    <location>
        <position position="69"/>
    </location>
</feature>
<feature type="sequence conflict" description="In Ref. 5; CAA23378." evidence="3" ref="5">
    <original>RS</original>
    <variation>VP</variation>
    <location>
        <begin position="79"/>
        <end position="80"/>
    </location>
</feature>
<feature type="sequence conflict" description="In Ref. 5; CAA23378." evidence="3" ref="5">
    <original>NF</original>
    <variation>KL</variation>
    <location>
        <begin position="86"/>
        <end position="87"/>
    </location>
</feature>